<accession>A0RAL4</accession>
<proteinExistence type="inferred from homology"/>
<evidence type="ECO:0000255" key="1">
    <source>
        <dbReference type="HAMAP-Rule" id="MF_00638"/>
    </source>
</evidence>
<reference key="1">
    <citation type="journal article" date="2007" name="J. Bacteriol.">
        <title>The complete genome sequence of Bacillus thuringiensis Al Hakam.</title>
        <authorList>
            <person name="Challacombe J.F."/>
            <person name="Altherr M.R."/>
            <person name="Xie G."/>
            <person name="Bhotika S.S."/>
            <person name="Brown N."/>
            <person name="Bruce D."/>
            <person name="Campbell C.S."/>
            <person name="Campbell M.L."/>
            <person name="Chen J."/>
            <person name="Chertkov O."/>
            <person name="Cleland C."/>
            <person name="Dimitrijevic M."/>
            <person name="Doggett N.A."/>
            <person name="Fawcett J.J."/>
            <person name="Glavina T."/>
            <person name="Goodwin L.A."/>
            <person name="Green L.D."/>
            <person name="Han C.S."/>
            <person name="Hill K.K."/>
            <person name="Hitchcock P."/>
            <person name="Jackson P.J."/>
            <person name="Keim P."/>
            <person name="Kewalramani A.R."/>
            <person name="Longmire J."/>
            <person name="Lucas S."/>
            <person name="Malfatti S."/>
            <person name="Martinez D."/>
            <person name="McMurry K."/>
            <person name="Meincke L.J."/>
            <person name="Misra M."/>
            <person name="Moseman B.L."/>
            <person name="Mundt M."/>
            <person name="Munk A.C."/>
            <person name="Okinaka R.T."/>
            <person name="Parson-Quintana B."/>
            <person name="Reilly L.P."/>
            <person name="Richardson P."/>
            <person name="Robinson D.L."/>
            <person name="Saunders E."/>
            <person name="Tapia R."/>
            <person name="Tesmer J.G."/>
            <person name="Thayer N."/>
            <person name="Thompson L.S."/>
            <person name="Tice H."/>
            <person name="Ticknor L.O."/>
            <person name="Wills P.L."/>
            <person name="Gilna P."/>
            <person name="Brettin T.S."/>
        </authorList>
    </citation>
    <scope>NUCLEOTIDE SEQUENCE [LARGE SCALE GENOMIC DNA]</scope>
    <source>
        <strain>Al Hakam</strain>
    </source>
</reference>
<comment type="function">
    <text evidence="1">Negative regulator of sigma-B activity. Phosphorylates and inactivates its specific antagonist protein, RsbV. Upon phosphorylation of RsbV, RsbW is released and binds to sigma-B, thereby blocking its ability to form an RNA polymerase holoenzyme (E-sigma-B).</text>
</comment>
<comment type="catalytic activity">
    <reaction evidence="1">
        <text>L-seryl-[protein] + ATP = O-phospho-L-seryl-[protein] + ADP + H(+)</text>
        <dbReference type="Rhea" id="RHEA:17989"/>
        <dbReference type="Rhea" id="RHEA-COMP:9863"/>
        <dbReference type="Rhea" id="RHEA-COMP:11604"/>
        <dbReference type="ChEBI" id="CHEBI:15378"/>
        <dbReference type="ChEBI" id="CHEBI:29999"/>
        <dbReference type="ChEBI" id="CHEBI:30616"/>
        <dbReference type="ChEBI" id="CHEBI:83421"/>
        <dbReference type="ChEBI" id="CHEBI:456216"/>
        <dbReference type="EC" id="2.7.11.1"/>
    </reaction>
</comment>
<comment type="catalytic activity">
    <reaction evidence="1">
        <text>L-threonyl-[protein] + ATP = O-phospho-L-threonyl-[protein] + ADP + H(+)</text>
        <dbReference type="Rhea" id="RHEA:46608"/>
        <dbReference type="Rhea" id="RHEA-COMP:11060"/>
        <dbReference type="Rhea" id="RHEA-COMP:11605"/>
        <dbReference type="ChEBI" id="CHEBI:15378"/>
        <dbReference type="ChEBI" id="CHEBI:30013"/>
        <dbReference type="ChEBI" id="CHEBI:30616"/>
        <dbReference type="ChEBI" id="CHEBI:61977"/>
        <dbReference type="ChEBI" id="CHEBI:456216"/>
        <dbReference type="EC" id="2.7.11.1"/>
    </reaction>
</comment>
<comment type="similarity">
    <text evidence="1">Belongs to the anti-sigma-factor family.</text>
</comment>
<name>RSBW_BACAH</name>
<sequence>MMERFEKIEMKIPAKAEYVAIIRLTMAGVANRMGFAYDDIEDMKIAISEACTNIVQHAYKEDVGEIAIVFGLYENRLEIMVADNGVSFDFNNLKRKVGPYDISKPVEHLPENGLGLYLINTLMDDIQIMHDEGMTVLMTKYIQREQVENDGNPISTYESY</sequence>
<organism>
    <name type="scientific">Bacillus thuringiensis (strain Al Hakam)</name>
    <dbReference type="NCBI Taxonomy" id="412694"/>
    <lineage>
        <taxon>Bacteria</taxon>
        <taxon>Bacillati</taxon>
        <taxon>Bacillota</taxon>
        <taxon>Bacilli</taxon>
        <taxon>Bacillales</taxon>
        <taxon>Bacillaceae</taxon>
        <taxon>Bacillus</taxon>
        <taxon>Bacillus cereus group</taxon>
    </lineage>
</organism>
<gene>
    <name evidence="1" type="primary">rsbW</name>
    <name type="ordered locus">BALH_0888</name>
</gene>
<dbReference type="EC" id="2.7.11.1" evidence="1"/>
<dbReference type="EMBL" id="CP000485">
    <property type="protein sequence ID" value="ABK84257.1"/>
    <property type="molecule type" value="Genomic_DNA"/>
</dbReference>
<dbReference type="RefSeq" id="WP_000970576.1">
    <property type="nucleotide sequence ID" value="NC_008600.1"/>
</dbReference>
<dbReference type="SMR" id="A0RAL4"/>
<dbReference type="GeneID" id="72447786"/>
<dbReference type="KEGG" id="btl:BALH_0888"/>
<dbReference type="HOGENOM" id="CLU_090336_11_1_9"/>
<dbReference type="GO" id="GO:0005524">
    <property type="term" value="F:ATP binding"/>
    <property type="evidence" value="ECO:0007669"/>
    <property type="project" value="UniProtKB-KW"/>
</dbReference>
<dbReference type="GO" id="GO:0106310">
    <property type="term" value="F:protein serine kinase activity"/>
    <property type="evidence" value="ECO:0007669"/>
    <property type="project" value="RHEA"/>
</dbReference>
<dbReference type="GO" id="GO:0004674">
    <property type="term" value="F:protein serine/threonine kinase activity"/>
    <property type="evidence" value="ECO:0007669"/>
    <property type="project" value="UniProtKB-KW"/>
</dbReference>
<dbReference type="GO" id="GO:0016989">
    <property type="term" value="F:sigma factor antagonist activity"/>
    <property type="evidence" value="ECO:0007669"/>
    <property type="project" value="InterPro"/>
</dbReference>
<dbReference type="CDD" id="cd16936">
    <property type="entry name" value="HATPase_RsbW-like"/>
    <property type="match status" value="1"/>
</dbReference>
<dbReference type="FunFam" id="3.30.565.10:FF:000026">
    <property type="entry name" value="Serine-protein kinase RsbW"/>
    <property type="match status" value="1"/>
</dbReference>
<dbReference type="Gene3D" id="3.30.565.10">
    <property type="entry name" value="Histidine kinase-like ATPase, C-terminal domain"/>
    <property type="match status" value="1"/>
</dbReference>
<dbReference type="HAMAP" id="MF_00638">
    <property type="entry name" value="Anti_sigma_B"/>
    <property type="match status" value="1"/>
</dbReference>
<dbReference type="InterPro" id="IPR050267">
    <property type="entry name" value="Anti-sigma-factor_SerPK"/>
</dbReference>
<dbReference type="InterPro" id="IPR036890">
    <property type="entry name" value="HATPase_C_sf"/>
</dbReference>
<dbReference type="InterPro" id="IPR010193">
    <property type="entry name" value="RsbW"/>
</dbReference>
<dbReference type="NCBIfam" id="NF003144">
    <property type="entry name" value="PRK04069.1"/>
    <property type="match status" value="1"/>
</dbReference>
<dbReference type="NCBIfam" id="TIGR01924">
    <property type="entry name" value="rsbW_low_gc"/>
    <property type="match status" value="1"/>
</dbReference>
<dbReference type="PANTHER" id="PTHR35526">
    <property type="entry name" value="ANTI-SIGMA-F FACTOR RSBW-RELATED"/>
    <property type="match status" value="1"/>
</dbReference>
<dbReference type="PANTHER" id="PTHR35526:SF9">
    <property type="entry name" value="SERINE-PROTEIN KINASE RSBW"/>
    <property type="match status" value="1"/>
</dbReference>
<dbReference type="Pfam" id="PF13581">
    <property type="entry name" value="HATPase_c_2"/>
    <property type="match status" value="1"/>
</dbReference>
<dbReference type="SUPFAM" id="SSF55874">
    <property type="entry name" value="ATPase domain of HSP90 chaperone/DNA topoisomerase II/histidine kinase"/>
    <property type="match status" value="1"/>
</dbReference>
<feature type="chain" id="PRO_0000301407" description="Serine-protein kinase RsbW">
    <location>
        <begin position="1"/>
        <end position="160"/>
    </location>
</feature>
<protein>
    <recommendedName>
        <fullName evidence="1">Serine-protein kinase RsbW</fullName>
        <ecNumber evidence="1">2.7.11.1</ecNumber>
    </recommendedName>
    <alternativeName>
        <fullName evidence="1">Anti-sigma-B factor</fullName>
    </alternativeName>
    <alternativeName>
        <fullName evidence="1">Sigma-B negative effector RsbW</fullName>
    </alternativeName>
</protein>
<keyword id="KW-0067">ATP-binding</keyword>
<keyword id="KW-0418">Kinase</keyword>
<keyword id="KW-0547">Nucleotide-binding</keyword>
<keyword id="KW-0723">Serine/threonine-protein kinase</keyword>
<keyword id="KW-0808">Transferase</keyword>